<comment type="function">
    <text evidence="1 2 3 4 6 7 9 10 11 12 15">Enhances virion budding by targeting host CD4 and Tetherin/BST2 to proteasome degradation. Degradation of CD4 prevents any unwanted premature interactions between viral Env and its host receptor CD4 in the endoplasmic reticulum. Degradation of antiretroviral protein Tetherin/BST2 is important for virion budding, as BST2 tethers new viral particles to the host cell membrane. Mechanistically, Vpu bridges either CD4 or BST2 to BTRC, a substrate recognition subunit of the Skp1/Cullin/F-box protein E3 ubiquitin ligase, induces their ubiquitination and subsequent proteasomal degradation. The alteration of the E3 ligase specificity by Vpu seems to promote the degradation of host IKBKB, leading to NF-kappa-B down-regulation and subsequent apoptosis. Acts as a viroporin that forms an oligomeric ion channel in membranes. Modulates the host DNA repair mechanisms to promote degradation of nuclear viral cDNA in cells that are already productively infected in order to suppress immune sensing and proviral hyper-integration (superinfection). Manipulates PML-NBs and modulates SUMOylation of host BLM protein thereby enhancing its DNA-end processing activity toward viral unintegrated linear DNA. Also inhibits RAD52-mediated homologous repair of viral cDNA, preventing the generation of dead-end circular forms of single copies of the long terminal repeat and permitting sustained nucleolytic attack.</text>
</comment>
<comment type="activity regulation">
    <text evidence="1 8">Ion channel activity is inhibited by hexamethylene amiloride in vitro.</text>
</comment>
<comment type="subunit">
    <text evidence="1 12 13 16">Homopentamer. Interacts with host CD4 and BRTC; these interactions induce proteasomal degradation of CD4. Interacts with host BST2; this interaction leads to the degradation of host BST2. Interacts with host FBXW11. Interacts with host AP1M1; this interaction plays a role in the mistrafficking and subsequent degradation of host BST2. Interacts with host RANBP2; this interaction allows Vpu to down-regulate host BLM sumoylation.</text>
</comment>
<comment type="subcellular location">
    <subcellularLocation>
        <location evidence="1">Host membrane</location>
        <topology evidence="1">Single-pass type I membrane protein</topology>
    </subcellularLocation>
</comment>
<comment type="domain">
    <text evidence="1 14">The N-terminus and transmembrane domains are required for self-oligomerization and proper virion budding, whereas the cytoplasmic domain is required for CD4 degradation. The cytoplasmic domain is composed of 2 amphipathic alpha helix that form a U-shape.</text>
</comment>
<comment type="PTM">
    <text evidence="1 5">Phosphorylated by host CK2. This phosphorylation is necessary for interaction with human BTRC and degradation of CD4.</text>
</comment>
<comment type="miscellaneous">
    <text>The infectious clone pNL4-3 is a chimeric provirus that consists of DNA from HIV isolates NY5 (5' half) and BRU (3' half).</text>
</comment>
<comment type="miscellaneous">
    <text evidence="1">HIV-1 lineages are divided in three main groups, M (for Major), O (for Outlier), and N (for New, or Non-M, Non-O). The vast majority of strains found worldwide belong to the group M. Group O seems to be endemic to and largely confined to Cameroon and neighboring countries in West Central Africa, where these viruses represent a small minority of HIV-1 strains. The group N is represented by a limited number of isolates from Cameroonian persons. The group M is further subdivided in 9 clades or subtypes (A to D, F to H, J and K).</text>
</comment>
<comment type="similarity">
    <text evidence="1">Belongs to the HIV-1 VPU protein family.</text>
</comment>
<dbReference type="EMBL" id="K02013">
    <property type="protein sequence ID" value="AAB59750.1"/>
    <property type="molecule type" value="Genomic_RNA"/>
</dbReference>
<dbReference type="EMBL" id="M19921">
    <property type="protein sequence ID" value="AAA44991.1"/>
    <property type="molecule type" value="Genomic_RNA"/>
</dbReference>
<dbReference type="IntAct" id="P05923">
    <property type="interactions" value="1"/>
</dbReference>
<dbReference type="MINT" id="P05923"/>
<dbReference type="iPTMnet" id="P05923"/>
<dbReference type="Proteomes" id="UP000007692">
    <property type="component" value="Genome"/>
</dbReference>
<dbReference type="GO" id="GO:0033644">
    <property type="term" value="C:host cell membrane"/>
    <property type="evidence" value="ECO:0007669"/>
    <property type="project" value="UniProtKB-SubCell"/>
</dbReference>
<dbReference type="GO" id="GO:0016020">
    <property type="term" value="C:membrane"/>
    <property type="evidence" value="ECO:0007669"/>
    <property type="project" value="UniProtKB-UniRule"/>
</dbReference>
<dbReference type="GO" id="GO:0042609">
    <property type="term" value="F:CD4 receptor binding"/>
    <property type="evidence" value="ECO:0007669"/>
    <property type="project" value="UniProtKB-UniRule"/>
</dbReference>
<dbReference type="GO" id="GO:0005261">
    <property type="term" value="F:monoatomic cation channel activity"/>
    <property type="evidence" value="ECO:0007669"/>
    <property type="project" value="UniProtKB-UniRule"/>
</dbReference>
<dbReference type="GO" id="GO:0032801">
    <property type="term" value="P:receptor catabolic process"/>
    <property type="evidence" value="ECO:0007669"/>
    <property type="project" value="UniProtKB-UniRule"/>
</dbReference>
<dbReference type="GO" id="GO:0052170">
    <property type="term" value="P:symbiont-mediated suppression of host innate immune response"/>
    <property type="evidence" value="ECO:0007669"/>
    <property type="project" value="UniProtKB-KW"/>
</dbReference>
<dbReference type="GO" id="GO:0039502">
    <property type="term" value="P:symbiont-mediated suppression of host type I interferon-mediated signaling pathway"/>
    <property type="evidence" value="ECO:0007669"/>
    <property type="project" value="UniProtKB-UniRule"/>
</dbReference>
<dbReference type="GO" id="GO:0039587">
    <property type="term" value="P:symbiont-mediated-mediated suppression of host tetherin activity"/>
    <property type="evidence" value="ECO:0007669"/>
    <property type="project" value="UniProtKB-UniRule"/>
</dbReference>
<dbReference type="GO" id="GO:0019076">
    <property type="term" value="P:viral release from host cell"/>
    <property type="evidence" value="ECO:0000314"/>
    <property type="project" value="CACAO"/>
</dbReference>
<dbReference type="Gene3D" id="1.10.195.10">
    <property type="entry name" value="HIV-1 VPU cytoplasmic domain"/>
    <property type="match status" value="1"/>
</dbReference>
<dbReference type="HAMAP" id="MF_04082">
    <property type="entry name" value="HIV_VPU"/>
    <property type="match status" value="1"/>
</dbReference>
<dbReference type="InterPro" id="IPR008187">
    <property type="entry name" value="Vpu"/>
</dbReference>
<dbReference type="InterPro" id="IPR009032">
    <property type="entry name" value="Vpu_cyt_dom_sf"/>
</dbReference>
<dbReference type="Pfam" id="PF00558">
    <property type="entry name" value="Vpu"/>
    <property type="match status" value="1"/>
</dbReference>
<dbReference type="SUPFAM" id="SSF57647">
    <property type="entry name" value="HIV-1 VPU cytoplasmic domain"/>
    <property type="match status" value="1"/>
</dbReference>
<keyword id="KW-0014">AIDS</keyword>
<keyword id="KW-0053">Apoptosis</keyword>
<keyword id="KW-1043">Host membrane</keyword>
<keyword id="KW-0945">Host-virus interaction</keyword>
<keyword id="KW-1090">Inhibition of host innate immune response by virus</keyword>
<keyword id="KW-1084">Inhibition of host tetherin by virus</keyword>
<keyword id="KW-0407">Ion channel</keyword>
<keyword id="KW-0406">Ion transport</keyword>
<keyword id="KW-0472">Membrane</keyword>
<keyword id="KW-0597">Phosphoprotein</keyword>
<keyword id="KW-1185">Reference proteome</keyword>
<keyword id="KW-0812">Transmembrane</keyword>
<keyword id="KW-1133">Transmembrane helix</keyword>
<keyword id="KW-0813">Transport</keyword>
<keyword id="KW-0899">Viral immunoevasion</keyword>
<name>VPU_HV1BR</name>
<evidence type="ECO:0000255" key="1">
    <source>
        <dbReference type="HAMAP-Rule" id="MF_04082"/>
    </source>
</evidence>
<evidence type="ECO:0000269" key="2">
    <source>
    </source>
</evidence>
<evidence type="ECO:0000269" key="3">
    <source>
    </source>
</evidence>
<evidence type="ECO:0000269" key="4">
    <source>
    </source>
</evidence>
<evidence type="ECO:0000269" key="5">
    <source>
    </source>
</evidence>
<evidence type="ECO:0000269" key="6">
    <source>
    </source>
</evidence>
<evidence type="ECO:0000269" key="7">
    <source>
    </source>
</evidence>
<evidence type="ECO:0000269" key="8">
    <source>
    </source>
</evidence>
<evidence type="ECO:0000269" key="9">
    <source>
    </source>
</evidence>
<evidence type="ECO:0000269" key="10">
    <source>
    </source>
</evidence>
<evidence type="ECO:0000269" key="11">
    <source>
    </source>
</evidence>
<evidence type="ECO:0000269" key="12">
    <source>
    </source>
</evidence>
<evidence type="ECO:0000269" key="13">
    <source>
    </source>
</evidence>
<evidence type="ECO:0000269" key="14">
    <source>
    </source>
</evidence>
<evidence type="ECO:0000269" key="15">
    <source>
    </source>
</evidence>
<evidence type="ECO:0000269" key="16">
    <source>
    </source>
</evidence>
<organismHost>
    <name type="scientific">Homo sapiens</name>
    <name type="common">Human</name>
    <dbReference type="NCBI Taxonomy" id="9606"/>
</organismHost>
<feature type="chain" id="PRO_0000085417" description="Protein Vpu">
    <location>
        <begin position="1"/>
        <end position="81"/>
    </location>
</feature>
<feature type="topological domain" description="Extracellular" evidence="1">
    <location>
        <begin position="1"/>
        <end position="6"/>
    </location>
</feature>
<feature type="transmembrane region" description="Helical" evidence="1 3">
    <location>
        <begin position="7"/>
        <end position="27"/>
    </location>
</feature>
<feature type="topological domain" description="Cytoplasmic" evidence="1">
    <location>
        <begin position="28"/>
        <end position="81"/>
    </location>
</feature>
<feature type="modified residue" description="Phosphoserine; by host CK2" evidence="1 5">
    <location>
        <position position="52"/>
    </location>
</feature>
<feature type="modified residue" description="Phosphoserine; by host CK2" evidence="1 5">
    <location>
        <position position="56"/>
    </location>
</feature>
<feature type="sequence variant" description="In strain: Clone pNL4-3.">
    <original>QI</original>
    <variation>IV</variation>
    <location>
        <begin position="5"/>
        <end position="6"/>
    </location>
</feature>
<feature type="sequence variant" description="In strain: Clone pNL4-3.">
    <original>A</original>
    <variation>V</variation>
    <location>
        <position position="9"/>
    </location>
</feature>
<feature type="sequence variant" description="In strain: Clone pNL4-3.">
    <original>I</original>
    <variation>V</variation>
    <location>
        <position position="60"/>
    </location>
</feature>
<feature type="mutagenesis site" description="Complete loss of interaction with human BTRC, and of CD4 degradation activity; when associated with N-56." evidence="16">
    <original>S</original>
    <variation>N</variation>
    <location>
        <position position="52"/>
    </location>
</feature>
<feature type="mutagenesis site" description="Complete loss of interaction with human BTRC, and of CD4 degradation activity; when associated with N-52." evidence="16">
    <original>S</original>
    <variation>N</variation>
    <location>
        <position position="56"/>
    </location>
</feature>
<proteinExistence type="evidence at protein level"/>
<organism>
    <name type="scientific">Human immunodeficiency virus type 1 group M subtype B (isolate BRU/LAI)</name>
    <name type="common">HIV-1</name>
    <dbReference type="NCBI Taxonomy" id="11686"/>
    <lineage>
        <taxon>Viruses</taxon>
        <taxon>Riboviria</taxon>
        <taxon>Pararnavirae</taxon>
        <taxon>Artverviricota</taxon>
        <taxon>Revtraviricetes</taxon>
        <taxon>Ortervirales</taxon>
        <taxon>Retroviridae</taxon>
        <taxon>Orthoretrovirinae</taxon>
        <taxon>Lentivirus</taxon>
        <taxon>Human immunodeficiency virus type 1</taxon>
    </lineage>
</organism>
<protein>
    <recommendedName>
        <fullName evidence="1">Protein Vpu</fullName>
    </recommendedName>
    <alternativeName>
        <fullName evidence="1">U ORF protein</fullName>
    </alternativeName>
    <alternativeName>
        <fullName evidence="1">Viral protein U</fullName>
    </alternativeName>
</protein>
<gene>
    <name evidence="1" type="primary">vpu</name>
</gene>
<sequence length="81" mass="9160">MQPIQIAIAALVVAIIIAIVVWSIVIIEYRKILRQRKIDRLIDRLIERAEDSGNESEGEISALVEMGVEMGHHAPWDIDDL</sequence>
<reference key="1">
    <citation type="journal article" date="1985" name="Cell">
        <title>Nucleotide sequence of the AIDS virus, LAV.</title>
        <authorList>
            <person name="Wain-Hobson S."/>
            <person name="Sonigo P."/>
            <person name="Danos O."/>
            <person name="Cole S."/>
            <person name="Alizon M."/>
        </authorList>
    </citation>
    <scope>NUCLEOTIDE SEQUENCE [GENOMIC RNA]</scope>
</reference>
<reference key="2">
    <citation type="submission" date="1988-06" db="EMBL/GenBank/DDBJ databases">
        <authorList>
            <person name="Buckler C.E."/>
            <person name="Buckler-White A.J."/>
            <person name="Willey R.L."/>
            <person name="McCoy J."/>
        </authorList>
    </citation>
    <scope>NUCLEOTIDE SEQUENCE [GENOMIC RNA]</scope>
    <source>
        <strain>Clone pNL4-3</strain>
    </source>
</reference>
<reference key="3">
    <citation type="journal article" date="1992" name="Eur. J. Biochem.">
        <title>Human-immunodeficiency-virus-type-1-encoded Vpu protein is phosphorylated by casein kinase II.</title>
        <authorList>
            <person name="Schubert U."/>
            <person name="Schneider T."/>
            <person name="Henklein P."/>
            <person name="Hoffmann K."/>
            <person name="Berthold E."/>
            <person name="Hauser H."/>
            <person name="Pauli G."/>
            <person name="Porstmann T."/>
        </authorList>
    </citation>
    <scope>PHOSPHORYLATION AT SER-52 AND SER-56</scope>
</reference>
<reference key="4">
    <citation type="journal article" date="1995" name="J. Virol.">
        <title>The human immunodeficiency virus type 1 Vpu protein specifically binds to the cytoplasmic domain of CD4: implications for the mechanism of degradation.</title>
        <authorList>
            <person name="Bour S."/>
            <person name="Schubert U."/>
            <person name="Strebel K."/>
        </authorList>
    </citation>
    <scope>INTERACTION WITH HOST CD4</scope>
</reference>
<reference key="5">
    <citation type="journal article" date="1996" name="FEBS Lett.">
        <title>Identification of an ion channel activity of the Vpu transmembrane domain and its involvement in the regulation of virus release from HIV-1-infected cells.</title>
        <authorList>
            <person name="Schubert U."/>
            <person name="Ferrer-Montiel A.V."/>
            <person name="Oblatt-Montal M."/>
            <person name="Henklein P."/>
            <person name="Strebel K."/>
            <person name="Montal M."/>
        </authorList>
    </citation>
    <scope>FUNCTION</scope>
</reference>
<reference key="6">
    <citation type="journal article" date="1996" name="J. Virol.">
        <title>The two biological activities of human immunodeficiency virus type 1 Vpu protein involve two separable structural domains.</title>
        <authorList>
            <person name="Schubert U."/>
            <person name="Bour S."/>
            <person name="Ferrer-Montiel A.V."/>
            <person name="Montal M."/>
            <person name="Maldarell F."/>
            <person name="Strebel K."/>
        </authorList>
    </citation>
    <scope>DOMAINS</scope>
</reference>
<reference key="7">
    <citation type="journal article" date="1998" name="Mol. Cell">
        <title>A novel human WD protein, h-beta TrCp, that interacts with HIV-1 Vpu connects CD4 to the ER degradation pathway through an F-box motif.</title>
        <authorList>
            <person name="Margottin F."/>
            <person name="Bour S.P."/>
            <person name="Durand H."/>
            <person name="Selig L."/>
            <person name="Benichou S."/>
            <person name="Richard V."/>
            <person name="Thomas D."/>
            <person name="Strebel K."/>
            <person name="Benarous R."/>
        </authorList>
    </citation>
    <scope>INTERACTION WITH HOST BTRC</scope>
    <scope>MUTAGENESIS OF SER-52 AND SER-56</scope>
</reference>
<reference key="8">
    <citation type="journal article" date="2001" name="J. Exp. Med.">
        <title>The human immunodeficiency virus type 1 accessory protein Vpu induces apoptosis by suppressing the nuclear factor kappaB-dependent expression of antiapoptotic factors.</title>
        <authorList>
            <person name="Akari H."/>
            <person name="Bour S."/>
            <person name="Kao S."/>
            <person name="Adachi A."/>
            <person name="Strebel K."/>
        </authorList>
    </citation>
    <scope>FUNCTION IN APOPTOSIS</scope>
</reference>
<reference key="9">
    <citation type="journal article" date="2002" name="Protein Sci.">
        <title>Expression, purification, and activities of full-length and truncated versions of the integral membrane protein Vpu from HIV-1.</title>
        <authorList>
            <person name="Ma C."/>
            <person name="Marassi F.M."/>
            <person name="Jones D.H."/>
            <person name="Straus S.K."/>
            <person name="Bour S."/>
            <person name="Strebel K."/>
            <person name="Schubert U."/>
            <person name="Oblatt-Montal M."/>
            <person name="Montal M."/>
            <person name="Opella S.J."/>
        </authorList>
    </citation>
    <scope>TOPOLOGY</scope>
    <scope>FUNCTION</scope>
</reference>
<reference key="10">
    <citation type="journal article" date="2003" name="Proc. Natl. Acad. Sci. U.S.A.">
        <title>Viral protein U counteracts a human host cell restriction that inhibits HIV-1 particle production.</title>
        <authorList>
            <person name="Varthakavi V."/>
            <person name="Smith R.M."/>
            <person name="Bour S.P."/>
            <person name="Strebel K."/>
            <person name="Spearman P."/>
        </authorList>
    </citation>
    <scope>FUNCTION</scope>
</reference>
<reference key="11">
    <citation type="journal article" date="2003" name="Microbes Infect.">
        <title>The HIV-1 Vpu protein: a multifunctional enhancer of viral particle release.</title>
        <authorList>
            <person name="Bour S."/>
            <person name="Strebel K."/>
        </authorList>
    </citation>
    <scope>REVIEW</scope>
</reference>
<reference key="12">
    <citation type="journal article" date="2006" name="J. Virol.">
        <title>Vpu and Tsg101 regulate intracellular targeting of the human immunodeficiency virus type 1 core protein precursor Pr55gag.</title>
        <authorList>
            <person name="Harila K."/>
            <person name="Prior I."/>
            <person name="Sjoberg M."/>
            <person name="Salminen A."/>
            <person name="Hinkula J."/>
            <person name="Suomalainen M."/>
        </authorList>
    </citation>
    <scope>FUNCTION</scope>
</reference>
<reference key="13">
    <citation type="journal article" date="2006" name="PLoS Pathog.">
        <title>HIV-1 Vpu promotes release and prevents endocytosis of nascent retrovirus particles from the plasma membrane.</title>
        <authorList>
            <person name="Neil S.J."/>
            <person name="Eastman S.W."/>
            <person name="Jouvenet N."/>
            <person name="Bieniasz P.D."/>
        </authorList>
    </citation>
    <scope>FUNCTION</scope>
</reference>
<reference key="14">
    <citation type="journal article" date="2006" name="Anal. Bioanal. Chem.">
        <title>Drug-protein interaction with Vpu from HIV-1: proposing binding sites for amiloride and one of its derivatives.</title>
        <authorList>
            <person name="Kim C.G."/>
            <person name="Lemaitre V."/>
            <person name="Watts A."/>
            <person name="Fischer W.B."/>
        </authorList>
    </citation>
    <scope>INHIBITION BY HEXAMETHYLENE AMILORIDE</scope>
</reference>
<reference key="15">
    <citation type="journal article" date="2008" name="Cell Host Microbe">
        <title>The interferon-induced protein BST-2 restricts HIV-1 release and is downregulated from the cell surface by the viral Vpu protein.</title>
        <authorList>
            <person name="Van Damme N."/>
            <person name="Goff D."/>
            <person name="Katsura C."/>
            <person name="Jorgenson R.L."/>
            <person name="Mitchell R."/>
            <person name="Johnson M.C."/>
            <person name="Stephens E.B."/>
            <person name="Guatelli J."/>
        </authorList>
    </citation>
    <scope>FUNCTION</scope>
</reference>
<reference key="16">
    <citation type="journal article" date="2008" name="Nature">
        <title>Tetherin inhibits retrovirus release and is antagonized by HIV-1 Vpu.</title>
        <authorList>
            <person name="Neil S.J."/>
            <person name="Zang T."/>
            <person name="Bieniasz P.D."/>
        </authorList>
    </citation>
    <scope>FUNCTION</scope>
</reference>
<reference key="17">
    <citation type="journal article" date="2009" name="Cell Host Microbe">
        <title>HIV-1 antagonism of CD317 is species specific and involves Vpu-mediated proteasomal degradation of the restriction factor.</title>
        <authorList>
            <person name="Goffinet C."/>
            <person name="Allespach I."/>
            <person name="Homann S."/>
            <person name="Tervo H.M."/>
            <person name="Habermann A."/>
            <person name="Rupp D."/>
            <person name="Oberbremer L."/>
            <person name="Kern C."/>
            <person name="Tibroni N."/>
            <person name="Welsch S."/>
            <person name="Krijnse-Locker J."/>
            <person name="Banting G."/>
            <person name="Krausslich H.G."/>
            <person name="Fackler O.T."/>
            <person name="Keppler O.T."/>
        </authorList>
    </citation>
    <scope>FUNCTION</scope>
</reference>
<reference key="18">
    <citation type="journal article" date="2009" name="J. Virol.">
        <title>Vpu directs the degradation of the human immunodeficiency virus restriction factor BST2/Tetherin via a {beta}TrCP-dependent mechanism.</title>
        <authorList>
            <person name="Douglas J.L."/>
            <person name="Viswanathan K."/>
            <person name="McCarroll M.N."/>
            <person name="Gustin J.K."/>
            <person name="Fruh K."/>
            <person name="Moses A.V."/>
        </authorList>
    </citation>
    <scope>FUNCTION</scope>
    <scope>INTERACTION WITH HOST BST2</scope>
</reference>
<accession>P05923</accession>